<dbReference type="EMBL" id="CP000053">
    <property type="protein sequence ID" value="AAY60941.1"/>
    <property type="molecule type" value="Genomic_DNA"/>
</dbReference>
<dbReference type="STRING" id="315456.RF_0090"/>
<dbReference type="KEGG" id="rfe:RF_0090"/>
<dbReference type="eggNOG" id="COG3704">
    <property type="taxonomic scope" value="Bacteria"/>
</dbReference>
<dbReference type="HOGENOM" id="CLU_027273_0_0_5"/>
<dbReference type="OrthoDB" id="7163542at2"/>
<dbReference type="Proteomes" id="UP000008548">
    <property type="component" value="Chromosome"/>
</dbReference>
<dbReference type="GO" id="GO:0005886">
    <property type="term" value="C:plasma membrane"/>
    <property type="evidence" value="ECO:0007669"/>
    <property type="project" value="UniProtKB-SubCell"/>
</dbReference>
<dbReference type="GO" id="GO:0030255">
    <property type="term" value="P:protein secretion by the type IV secretion system"/>
    <property type="evidence" value="ECO:0007669"/>
    <property type="project" value="InterPro"/>
</dbReference>
<dbReference type="InterPro" id="IPR007688">
    <property type="entry name" value="Conjugal_tfr_TrbL/VirB6"/>
</dbReference>
<dbReference type="Pfam" id="PF04610">
    <property type="entry name" value="TrbL"/>
    <property type="match status" value="1"/>
</dbReference>
<proteinExistence type="inferred from homology"/>
<feature type="signal peptide" evidence="1">
    <location>
        <begin position="1"/>
        <end position="24"/>
    </location>
</feature>
<feature type="chain" id="PRO_0000269209" description="Uncharacterized protein RF_0090">
    <location>
        <begin position="25"/>
        <end position="672"/>
    </location>
</feature>
<feature type="transmembrane region" description="Helical" evidence="1">
    <location>
        <begin position="226"/>
        <end position="246"/>
    </location>
</feature>
<feature type="transmembrane region" description="Helical" evidence="1">
    <location>
        <begin position="254"/>
        <end position="274"/>
    </location>
</feature>
<feature type="transmembrane region" description="Helical" evidence="1">
    <location>
        <begin position="410"/>
        <end position="430"/>
    </location>
</feature>
<feature type="transmembrane region" description="Helical" evidence="1">
    <location>
        <begin position="436"/>
        <end position="456"/>
    </location>
</feature>
<feature type="transmembrane region" description="Helical" evidence="1">
    <location>
        <begin position="469"/>
        <end position="489"/>
    </location>
</feature>
<feature type="transmembrane region" description="Helical" evidence="1">
    <location>
        <begin position="562"/>
        <end position="582"/>
    </location>
</feature>
<feature type="region of interest" description="Disordered" evidence="2">
    <location>
        <begin position="626"/>
        <end position="672"/>
    </location>
</feature>
<feature type="compositionally biased region" description="Basic and acidic residues" evidence="2">
    <location>
        <begin position="633"/>
        <end position="647"/>
    </location>
</feature>
<feature type="compositionally biased region" description="Gly residues" evidence="2">
    <location>
        <begin position="656"/>
        <end position="672"/>
    </location>
</feature>
<organism>
    <name type="scientific">Rickettsia felis (strain ATCC VR-1525 / URRWXCal2)</name>
    <name type="common">Rickettsia azadi</name>
    <dbReference type="NCBI Taxonomy" id="315456"/>
    <lineage>
        <taxon>Bacteria</taxon>
        <taxon>Pseudomonadati</taxon>
        <taxon>Pseudomonadota</taxon>
        <taxon>Alphaproteobacteria</taxon>
        <taxon>Rickettsiales</taxon>
        <taxon>Rickettsiaceae</taxon>
        <taxon>Rickettsieae</taxon>
        <taxon>Rickettsia</taxon>
        <taxon>spotted fever group</taxon>
    </lineage>
</organism>
<protein>
    <recommendedName>
        <fullName>Uncharacterized protein RF_0090</fullName>
    </recommendedName>
</protein>
<name>Y090_RICFE</name>
<gene>
    <name type="ordered locus">RF_0090</name>
</gene>
<keyword id="KW-1003">Cell membrane</keyword>
<keyword id="KW-0472">Membrane</keyword>
<keyword id="KW-0732">Signal</keyword>
<keyword id="KW-0812">Transmembrane</keyword>
<keyword id="KW-1133">Transmembrane helix</keyword>
<comment type="subcellular location">
    <subcellularLocation>
        <location evidence="3">Cell membrane</location>
        <topology evidence="3">Multi-pass membrane protein</topology>
    </subcellularLocation>
</comment>
<comment type="similarity">
    <text evidence="3">Belongs to the TrbL/VirB6 family.</text>
</comment>
<sequence length="672" mass="72815">MKTLKTLKIFIIICIASVSLASFAGFGESCSSLPTTSDGYLETDTAYGYIIRNIDMKDPRGNCNSAASSITFCFKNIEGSSSPCTIYNLNEGDSKKISDLSTDNNPDLGANPVLKDIVLTVKKWDNDLCLVMPTSRGPMPVACKSLSATPTPTPPDDENCNIGKSCYTGANYSQSLINFSGLAVQCLSETLNKVFFAGNSCSSQDQNSRITNLAAFSTFQGYLKRIIGAALILYTMFFAFNMALNKEYASTEKIALFVIKFLLVAYFSIGLGPLDFSGGQPTKENGMLKYGLPLLTGAAPDFAQMIFNAAGSRGLCQFDNSKYKDGYKFYGLWDAIDCRIGYYLGLDLLYNIDKNGVLGNSIGNGPGGNNTPIPNFDPDGKKDRPKDLSKAGALRFFAVMFGFFMAGNVIILAAGLVFSVIFLSILLYFITHYLVCMITIYVMTYISPIFIPMALFTRTKAYFDGWLKVCISCALQPAVVAGFIALLITMYDSAIFKNCEFLRYDYEKGDIRFSTFELRLPNGGADKCQESFGYKMLQYYAGEGWEEHLLILFPIKSIVKDVVSILAELLCVLVFSVIFYYFSKSIGRFASDLTNGPNMDAVTASPTKIVDLVKKGAAFLKDAAMASQGKPSVGDKPDVGGKRKEGEQQGGDSESGAGGGLADLASGSGGGK</sequence>
<reference key="1">
    <citation type="journal article" date="2005" name="PLoS Biol.">
        <title>The genome sequence of Rickettsia felis identifies the first putative conjugative plasmid in an obligate intracellular parasite.</title>
        <authorList>
            <person name="Ogata H."/>
            <person name="Renesto P."/>
            <person name="Audic S."/>
            <person name="Robert C."/>
            <person name="Blanc G."/>
            <person name="Fournier P.-E."/>
            <person name="Parinello H."/>
            <person name="Claverie J.-M."/>
            <person name="Raoult D."/>
        </authorList>
    </citation>
    <scope>NUCLEOTIDE SEQUENCE [LARGE SCALE GENOMIC DNA]</scope>
    <source>
        <strain>ATCC VR-1525 / URRWXCal2</strain>
    </source>
</reference>
<accession>Q4UNB7</accession>
<evidence type="ECO:0000255" key="1"/>
<evidence type="ECO:0000256" key="2">
    <source>
        <dbReference type="SAM" id="MobiDB-lite"/>
    </source>
</evidence>
<evidence type="ECO:0000305" key="3"/>